<proteinExistence type="evidence at protein level"/>
<feature type="signal peptide" evidence="2">
    <location>
        <begin position="1"/>
        <end position="22"/>
    </location>
</feature>
<feature type="chain" id="PRO_0000012927" description="Metabotropic glutamate receptor 3">
    <location>
        <begin position="23"/>
        <end position="879"/>
    </location>
</feature>
<feature type="topological domain" description="Extracellular" evidence="2">
    <location>
        <begin position="23"/>
        <end position="576"/>
    </location>
</feature>
<feature type="transmembrane region" description="Helical; Name=1" evidence="2">
    <location>
        <begin position="577"/>
        <end position="599"/>
    </location>
</feature>
<feature type="topological domain" description="Cytoplasmic" evidence="2">
    <location>
        <begin position="600"/>
        <end position="613"/>
    </location>
</feature>
<feature type="transmembrane region" description="Helical; Name=2" evidence="2">
    <location>
        <begin position="614"/>
        <end position="634"/>
    </location>
</feature>
<feature type="topological domain" description="Extracellular" evidence="2">
    <location>
        <begin position="635"/>
        <end position="645"/>
    </location>
</feature>
<feature type="transmembrane region" description="Helical; Name=3" evidence="2">
    <location>
        <begin position="646"/>
        <end position="664"/>
    </location>
</feature>
<feature type="topological domain" description="Cytoplasmic" evidence="2">
    <location>
        <begin position="665"/>
        <end position="688"/>
    </location>
</feature>
<feature type="transmembrane region" description="Helical; Name=4" evidence="2">
    <location>
        <begin position="689"/>
        <end position="709"/>
    </location>
</feature>
<feature type="topological domain" description="Extracellular" evidence="2">
    <location>
        <begin position="710"/>
        <end position="734"/>
    </location>
</feature>
<feature type="transmembrane region" description="Helical; Name=5" evidence="2">
    <location>
        <begin position="735"/>
        <end position="756"/>
    </location>
</feature>
<feature type="topological domain" description="Cytoplasmic" evidence="2">
    <location>
        <begin position="757"/>
        <end position="769"/>
    </location>
</feature>
<feature type="transmembrane region" description="Helical; Name=6" evidence="2">
    <location>
        <begin position="770"/>
        <end position="792"/>
    </location>
</feature>
<feature type="topological domain" description="Extracellular" evidence="2">
    <location>
        <begin position="793"/>
        <end position="802"/>
    </location>
</feature>
<feature type="transmembrane region" description="Helical; Name=7" evidence="2">
    <location>
        <begin position="803"/>
        <end position="828"/>
    </location>
</feature>
<feature type="topological domain" description="Cytoplasmic" evidence="2">
    <location>
        <begin position="829"/>
        <end position="879"/>
    </location>
</feature>
<feature type="binding site" evidence="1">
    <location>
        <position position="151"/>
    </location>
    <ligand>
        <name>L-glutamate</name>
        <dbReference type="ChEBI" id="CHEBI:29985"/>
    </ligand>
</feature>
<feature type="binding site" evidence="1">
    <location>
        <begin position="172"/>
        <end position="174"/>
    </location>
    <ligand>
        <name>L-glutamate</name>
        <dbReference type="ChEBI" id="CHEBI:29985"/>
    </ligand>
</feature>
<feature type="binding site" evidence="1">
    <location>
        <position position="222"/>
    </location>
    <ligand>
        <name>L-glutamate</name>
        <dbReference type="ChEBI" id="CHEBI:29985"/>
    </ligand>
</feature>
<feature type="binding site" evidence="1">
    <location>
        <position position="301"/>
    </location>
    <ligand>
        <name>L-glutamate</name>
        <dbReference type="ChEBI" id="CHEBI:29985"/>
    </ligand>
</feature>
<feature type="binding site" evidence="1">
    <location>
        <position position="389"/>
    </location>
    <ligand>
        <name>L-glutamate</name>
        <dbReference type="ChEBI" id="CHEBI:29985"/>
    </ligand>
</feature>
<feature type="glycosylation site" description="N-linked (GlcNAc...) asparagine" evidence="2">
    <location>
        <position position="209"/>
    </location>
</feature>
<feature type="glycosylation site" description="N-linked (GlcNAc...) asparagine" evidence="2">
    <location>
        <position position="292"/>
    </location>
</feature>
<feature type="glycosylation site" description="N-linked (GlcNAc...) asparagine" evidence="2">
    <location>
        <position position="414"/>
    </location>
</feature>
<feature type="glycosylation site" description="N-linked (GlcNAc...) asparagine" evidence="2">
    <location>
        <position position="439"/>
    </location>
</feature>
<feature type="disulfide bond" evidence="4">
    <location>
        <begin position="57"/>
        <end position="99"/>
    </location>
</feature>
<feature type="disulfide bond" evidence="1">
    <location>
        <begin position="240"/>
        <end position="527"/>
    </location>
</feature>
<feature type="disulfide bond" evidence="4">
    <location>
        <begin position="361"/>
        <end position="373"/>
    </location>
</feature>
<feature type="disulfide bond" evidence="4">
    <location>
        <begin position="412"/>
        <end position="419"/>
    </location>
</feature>
<feature type="disulfide bond" evidence="1">
    <location>
        <begin position="509"/>
        <end position="528"/>
    </location>
</feature>
<feature type="disulfide bond" evidence="1">
    <location>
        <begin position="513"/>
        <end position="531"/>
    </location>
</feature>
<feature type="disulfide bond" evidence="1">
    <location>
        <begin position="534"/>
        <end position="546"/>
    </location>
</feature>
<feature type="disulfide bond" evidence="1">
    <location>
        <begin position="549"/>
        <end position="562"/>
    </location>
</feature>
<feature type="splice variant" id="VSP_047679" description="In isoform 2." evidence="5">
    <original>APFNPNKDADSIVKFDTFGDGMGRYNVFNFQNVGGKYSYLKVGHWAETLSLDVNSIHWSRNSVPTSQCSDPCAPNEMKNMQPGDVCCWICIPCEPY</original>
    <variation>GADDNHVHLCQPEWLCGLGLFVCTQGSHHPVSTPEECCHTQTAPQQVQCQWNWDHILSVLCKHVCANGVQWAGSPRLHHLISVIVNCSSVLVFLDC</variation>
    <location>
        <begin position="442"/>
        <end position="537"/>
    </location>
</feature>
<feature type="splice variant" id="VSP_047680" description="In isoform 2." evidence="5">
    <location>
        <begin position="538"/>
        <end position="879"/>
    </location>
</feature>
<feature type="sequence variant" id="VAR_049274" description="In dbSNP:rs17161026.">
    <original>G</original>
    <variation>D</variation>
    <location>
        <position position="475"/>
    </location>
</feature>
<feature type="sequence conflict" description="In Ref. 4; AAH41407." evidence="6" ref="4">
    <original>L</original>
    <variation>F</variation>
    <location>
        <position position="96"/>
    </location>
</feature>
<feature type="sequence conflict" description="In Ref. 4; AAH22496." evidence="6" ref="4">
    <original>P</original>
    <variation>T</variation>
    <location>
        <position position="446"/>
    </location>
</feature>
<feature type="sequence conflict" description="In Ref. 4; AAH22496." evidence="6" ref="4">
    <original>P</original>
    <variation>A</variation>
    <location>
        <position position="512"/>
    </location>
</feature>
<feature type="sequence conflict" description="In Ref. 4; AAH22496." evidence="6" ref="4">
    <original>S</original>
    <variation>Y</variation>
    <location>
        <position position="856"/>
    </location>
</feature>
<feature type="strand" evidence="7">
    <location>
        <begin position="33"/>
        <end position="35"/>
    </location>
</feature>
<feature type="strand" evidence="7">
    <location>
        <begin position="38"/>
        <end position="45"/>
    </location>
</feature>
<feature type="strand" evidence="7">
    <location>
        <begin position="48"/>
        <end position="50"/>
    </location>
</feature>
<feature type="strand" evidence="13">
    <location>
        <begin position="52"/>
        <end position="54"/>
    </location>
</feature>
<feature type="strand" evidence="7">
    <location>
        <begin position="56"/>
        <end position="60"/>
    </location>
</feature>
<feature type="turn" evidence="7">
    <location>
        <begin position="62"/>
        <end position="65"/>
    </location>
</feature>
<feature type="helix" evidence="7">
    <location>
        <begin position="66"/>
        <end position="81"/>
    </location>
</feature>
<feature type="strand" evidence="7">
    <location>
        <begin position="83"/>
        <end position="86"/>
    </location>
</feature>
<feature type="strand" evidence="7">
    <location>
        <begin position="91"/>
        <end position="97"/>
    </location>
</feature>
<feature type="helix" evidence="7">
    <location>
        <begin position="102"/>
        <end position="114"/>
    </location>
</feature>
<feature type="strand" evidence="7">
    <location>
        <begin position="142"/>
        <end position="146"/>
    </location>
</feature>
<feature type="helix" evidence="7">
    <location>
        <begin position="151"/>
        <end position="161"/>
    </location>
</feature>
<feature type="helix" evidence="7">
    <location>
        <begin position="162"/>
        <end position="164"/>
    </location>
</feature>
<feature type="strand" evidence="7">
    <location>
        <begin position="168"/>
        <end position="172"/>
    </location>
</feature>
<feature type="helix" evidence="7">
    <location>
        <begin position="176"/>
        <end position="179"/>
    </location>
</feature>
<feature type="turn" evidence="7">
    <location>
        <begin position="181"/>
        <end position="186"/>
    </location>
</feature>
<feature type="strand" evidence="7">
    <location>
        <begin position="187"/>
        <end position="191"/>
    </location>
</feature>
<feature type="helix" evidence="7">
    <location>
        <begin position="195"/>
        <end position="207"/>
    </location>
</feature>
<feature type="strand" evidence="7">
    <location>
        <begin position="212"/>
        <end position="220"/>
    </location>
</feature>
<feature type="helix" evidence="7">
    <location>
        <begin position="221"/>
        <end position="235"/>
    </location>
</feature>
<feature type="turn" evidence="7">
    <location>
        <begin position="236"/>
        <end position="238"/>
    </location>
</feature>
<feature type="strand" evidence="7">
    <location>
        <begin position="240"/>
        <end position="247"/>
    </location>
</feature>
<feature type="strand" evidence="16">
    <location>
        <begin position="250"/>
        <end position="252"/>
    </location>
</feature>
<feature type="helix" evidence="7">
    <location>
        <begin position="253"/>
        <end position="264"/>
    </location>
</feature>
<feature type="strand" evidence="7">
    <location>
        <begin position="271"/>
        <end position="275"/>
    </location>
</feature>
<feature type="helix" evidence="7">
    <location>
        <begin position="278"/>
        <end position="290"/>
    </location>
</feature>
<feature type="strand" evidence="7">
    <location>
        <begin position="296"/>
        <end position="299"/>
    </location>
</feature>
<feature type="turn" evidence="7">
    <location>
        <begin position="301"/>
        <end position="305"/>
    </location>
</feature>
<feature type="helix" evidence="7">
    <location>
        <begin position="307"/>
        <end position="310"/>
    </location>
</feature>
<feature type="turn" evidence="7">
    <location>
        <begin position="314"/>
        <end position="319"/>
    </location>
</feature>
<feature type="strand" evidence="7">
    <location>
        <begin position="321"/>
        <end position="325"/>
    </location>
</feature>
<feature type="helix" evidence="7">
    <location>
        <begin position="331"/>
        <end position="338"/>
    </location>
</feature>
<feature type="turn" evidence="7">
    <location>
        <begin position="342"/>
        <end position="344"/>
    </location>
</feature>
<feature type="helix" evidence="7">
    <location>
        <begin position="351"/>
        <end position="359"/>
    </location>
</feature>
<feature type="strand" evidence="9">
    <location>
        <begin position="361"/>
        <end position="364"/>
    </location>
</feature>
<feature type="strand" evidence="9">
    <location>
        <begin position="369"/>
        <end position="372"/>
    </location>
</feature>
<feature type="turn" evidence="7">
    <location>
        <begin position="381"/>
        <end position="383"/>
    </location>
</feature>
<feature type="helix" evidence="7">
    <location>
        <begin position="390"/>
        <end position="411"/>
    </location>
</feature>
<feature type="strand" evidence="15">
    <location>
        <begin position="412"/>
        <end position="414"/>
    </location>
</feature>
<feature type="strand" evidence="16">
    <location>
        <begin position="415"/>
        <end position="417"/>
    </location>
</feature>
<feature type="helix" evidence="7">
    <location>
        <begin position="420"/>
        <end position="423"/>
    </location>
</feature>
<feature type="helix" evidence="7">
    <location>
        <begin position="427"/>
        <end position="433"/>
    </location>
</feature>
<feature type="helix" evidence="7">
    <location>
        <begin position="435"/>
        <end position="437"/>
    </location>
</feature>
<feature type="strand" evidence="8">
    <location>
        <begin position="438"/>
        <end position="440"/>
    </location>
</feature>
<feature type="turn" evidence="11">
    <location>
        <begin position="443"/>
        <end position="446"/>
    </location>
</feature>
<feature type="helix" evidence="15">
    <location>
        <begin position="450"/>
        <end position="452"/>
    </location>
</feature>
<feature type="strand" evidence="8">
    <location>
        <begin position="453"/>
        <end position="455"/>
    </location>
</feature>
<feature type="strand" evidence="7">
    <location>
        <begin position="466"/>
        <end position="476"/>
    </location>
</feature>
<feature type="strand" evidence="7">
    <location>
        <begin position="478"/>
        <end position="492"/>
    </location>
</feature>
<feature type="helix" evidence="7">
    <location>
        <begin position="494"/>
        <end position="496"/>
    </location>
</feature>
<feature type="strand" evidence="9">
    <location>
        <begin position="499"/>
        <end position="502"/>
    </location>
</feature>
<feature type="turn" evidence="9">
    <location>
        <begin position="507"/>
        <end position="510"/>
    </location>
</feature>
<feature type="turn" evidence="9">
    <location>
        <begin position="515"/>
        <end position="517"/>
    </location>
</feature>
<feature type="strand" evidence="15">
    <location>
        <begin position="518"/>
        <end position="521"/>
    </location>
</feature>
<feature type="strand" evidence="15">
    <location>
        <begin position="523"/>
        <end position="527"/>
    </location>
</feature>
<feature type="strand" evidence="15">
    <location>
        <begin position="530"/>
        <end position="533"/>
    </location>
</feature>
<feature type="strand" evidence="12">
    <location>
        <begin position="538"/>
        <end position="540"/>
    </location>
</feature>
<feature type="strand" evidence="9">
    <location>
        <begin position="543"/>
        <end position="545"/>
    </location>
</feature>
<feature type="strand" evidence="15">
    <location>
        <begin position="550"/>
        <end position="555"/>
    </location>
</feature>
<feature type="strand" evidence="9">
    <location>
        <begin position="556"/>
        <end position="560"/>
    </location>
</feature>
<feature type="strand" evidence="10">
    <location>
        <begin position="567"/>
        <end position="569"/>
    </location>
</feature>
<feature type="strand" evidence="15">
    <location>
        <begin position="572"/>
        <end position="574"/>
    </location>
</feature>
<feature type="helix" evidence="9">
    <location>
        <begin position="575"/>
        <end position="600"/>
    </location>
</feature>
<feature type="strand" evidence="15">
    <location>
        <begin position="602"/>
        <end position="606"/>
    </location>
</feature>
<feature type="helix" evidence="9">
    <location>
        <begin position="611"/>
        <end position="632"/>
    </location>
</feature>
<feature type="helix" evidence="9">
    <location>
        <begin position="640"/>
        <end position="664"/>
    </location>
</feature>
<feature type="helix" evidence="9">
    <location>
        <begin position="683"/>
        <end position="699"/>
    </location>
</feature>
<feature type="turn" evidence="9">
    <location>
        <begin position="700"/>
        <end position="702"/>
    </location>
</feature>
<feature type="helix" evidence="9">
    <location>
        <begin position="703"/>
        <end position="706"/>
    </location>
</feature>
<feature type="strand" evidence="9">
    <location>
        <begin position="711"/>
        <end position="714"/>
    </location>
</feature>
<feature type="helix" evidence="11">
    <location>
        <begin position="718"/>
        <end position="720"/>
    </location>
</feature>
<feature type="strand" evidence="9">
    <location>
        <begin position="721"/>
        <end position="723"/>
    </location>
</feature>
<feature type="turn" evidence="12">
    <location>
        <begin position="730"/>
        <end position="732"/>
    </location>
</feature>
<feature type="helix" evidence="9">
    <location>
        <begin position="734"/>
        <end position="757"/>
    </location>
</feature>
<feature type="helix" evidence="14">
    <location>
        <begin position="762"/>
        <end position="764"/>
    </location>
</feature>
<feature type="helix" evidence="9">
    <location>
        <begin position="765"/>
        <end position="791"/>
    </location>
</feature>
<feature type="helix" evidence="9">
    <location>
        <begin position="797"/>
        <end position="825"/>
    </location>
</feature>
<keyword id="KW-0002">3D-structure</keyword>
<keyword id="KW-0025">Alternative splicing</keyword>
<keyword id="KW-1003">Cell membrane</keyword>
<keyword id="KW-1015">Disulfide bond</keyword>
<keyword id="KW-0297">G-protein coupled receptor</keyword>
<keyword id="KW-0325">Glycoprotein</keyword>
<keyword id="KW-0472">Membrane</keyword>
<keyword id="KW-1267">Proteomics identification</keyword>
<keyword id="KW-0675">Receptor</keyword>
<keyword id="KW-1185">Reference proteome</keyword>
<keyword id="KW-0732">Signal</keyword>
<keyword id="KW-0807">Transducer</keyword>
<keyword id="KW-0812">Transmembrane</keyword>
<keyword id="KW-1133">Transmembrane helix</keyword>
<evidence type="ECO:0000250" key="1"/>
<evidence type="ECO:0000255" key="2"/>
<evidence type="ECO:0000269" key="3">
    <source>
    </source>
</evidence>
<evidence type="ECO:0000269" key="4">
    <source ref="5"/>
</evidence>
<evidence type="ECO:0000303" key="5">
    <source>
    </source>
</evidence>
<evidence type="ECO:0000305" key="6"/>
<evidence type="ECO:0007829" key="7">
    <source>
        <dbReference type="PDB" id="3SM9"/>
    </source>
</evidence>
<evidence type="ECO:0007829" key="8">
    <source>
        <dbReference type="PDB" id="4XAR"/>
    </source>
</evidence>
<evidence type="ECO:0007829" key="9">
    <source>
        <dbReference type="PDB" id="8JCU"/>
    </source>
</evidence>
<evidence type="ECO:0007829" key="10">
    <source>
        <dbReference type="PDB" id="8JCV"/>
    </source>
</evidence>
<evidence type="ECO:0007829" key="11">
    <source>
        <dbReference type="PDB" id="8JCW"/>
    </source>
</evidence>
<evidence type="ECO:0007829" key="12">
    <source>
        <dbReference type="PDB" id="8JCX"/>
    </source>
</evidence>
<evidence type="ECO:0007829" key="13">
    <source>
        <dbReference type="PDB" id="8JCZ"/>
    </source>
</evidence>
<evidence type="ECO:0007829" key="14">
    <source>
        <dbReference type="PDB" id="8JD0"/>
    </source>
</evidence>
<evidence type="ECO:0007829" key="15">
    <source>
        <dbReference type="PDB" id="8JD2"/>
    </source>
</evidence>
<evidence type="ECO:0007829" key="16">
    <source>
        <dbReference type="PDB" id="8JD3"/>
    </source>
</evidence>
<comment type="function">
    <text evidence="3">G-protein coupled receptor for glutamate. Ligand binding causes a conformation change that triggers signaling via guanine nucleotide-binding proteins (G proteins) and modulates the activity of down-stream effectors. Signaling inhibits adenylate cyclase activity.</text>
</comment>
<comment type="subunit">
    <text evidence="1">Interacts with TAMALIN.</text>
</comment>
<comment type="subcellular location">
    <subcellularLocation>
        <location evidence="3">Cell membrane</location>
        <topology evidence="3">Multi-pass membrane protein</topology>
    </subcellularLocation>
</comment>
<comment type="alternative products">
    <event type="alternative splicing"/>
    <isoform>
        <id>Q14832-1</id>
        <name>1</name>
        <sequence type="displayed"/>
    </isoform>
    <isoform>
        <id>Q14832-2</id>
        <name>2</name>
        <name>GRM3Delta4</name>
        <sequence type="described" ref="VSP_047679 VSP_047680"/>
    </isoform>
</comment>
<comment type="tissue specificity">
    <text evidence="3">Detected in brain cortex, thalamus, subthalamic nucleus, substantia nigra, hypothalamus, hippocampus, corpus callosum, caudate nucleus and amygdala.</text>
</comment>
<comment type="miscellaneous">
    <molecule>Isoform 2</molecule>
    <text evidence="6">Appears to be membrane-associated, despite the absence of the seven-transmembrane domain.</text>
</comment>
<comment type="similarity">
    <text evidence="6">Belongs to the G-protein coupled receptor 3 family.</text>
</comment>
<comment type="sequence caution" evidence="6">
    <conflict type="erroneous initiation">
        <sequence resource="EMBL-CDS" id="AAD15616"/>
    </conflict>
    <text>Truncated N-terminus.</text>
</comment>
<comment type="sequence caution" evidence="6">
    <conflict type="erroneous initiation">
        <sequence resource="EMBL-CDS" id="ABC47402"/>
    </conflict>
    <text>Extended N-terminus.</text>
</comment>
<comment type="sequence caution" evidence="6">
    <conflict type="erroneous initiation">
        <sequence resource="EMBL-CDS" id="CAA54796"/>
    </conflict>
    <text>Truncated N-terminus.</text>
</comment>
<protein>
    <recommendedName>
        <fullName>Metabotropic glutamate receptor 3</fullName>
        <shortName>mGluR3</shortName>
    </recommendedName>
</protein>
<dbReference type="EMBL" id="X77748">
    <property type="protein sequence ID" value="CAA54796.1"/>
    <property type="status" value="ALT_INIT"/>
    <property type="molecule type" value="mRNA"/>
</dbReference>
<dbReference type="EMBL" id="DQ315361">
    <property type="protein sequence ID" value="ABC47402.1"/>
    <property type="status" value="ALT_INIT"/>
    <property type="molecule type" value="mRNA"/>
</dbReference>
<dbReference type="EMBL" id="AC004829">
    <property type="status" value="NOT_ANNOTATED_CDS"/>
    <property type="molecule type" value="Genomic_DNA"/>
</dbReference>
<dbReference type="EMBL" id="AC005009">
    <property type="protein sequence ID" value="AAD15616.1"/>
    <property type="status" value="ALT_INIT"/>
    <property type="molecule type" value="Genomic_DNA"/>
</dbReference>
<dbReference type="EMBL" id="AC002081">
    <property type="protein sequence ID" value="AAC60379.2"/>
    <property type="molecule type" value="Genomic_DNA"/>
</dbReference>
<dbReference type="EMBL" id="BC022496">
    <property type="protein sequence ID" value="AAH22496.2"/>
    <property type="molecule type" value="mRNA"/>
</dbReference>
<dbReference type="EMBL" id="BC041407">
    <property type="protein sequence ID" value="AAH41407.1"/>
    <property type="molecule type" value="mRNA"/>
</dbReference>
<dbReference type="CCDS" id="CCDS5600.1">
    <molecule id="Q14832-1"/>
</dbReference>
<dbReference type="CCDS" id="CCDS87515.1">
    <molecule id="Q14832-2"/>
</dbReference>
<dbReference type="RefSeq" id="NP_000831.2">
    <molecule id="Q14832-1"/>
    <property type="nucleotide sequence ID" value="NM_000840.2"/>
</dbReference>
<dbReference type="RefSeq" id="NP_001350451.1">
    <molecule id="Q14832-2"/>
    <property type="nucleotide sequence ID" value="NM_001363522.2"/>
</dbReference>
<dbReference type="RefSeq" id="XP_011514390.1">
    <property type="nucleotide sequence ID" value="XM_011516088.1"/>
</dbReference>
<dbReference type="RefSeq" id="XP_047276224.1">
    <molecule id="Q14832-1"/>
    <property type="nucleotide sequence ID" value="XM_047420268.1"/>
</dbReference>
<dbReference type="PDB" id="3SM9">
    <property type="method" value="X-ray"/>
    <property type="resolution" value="2.26 A"/>
    <property type="chains" value="A=26-504"/>
</dbReference>
<dbReference type="PDB" id="4XAR">
    <property type="method" value="X-ray"/>
    <property type="resolution" value="2.26 A"/>
    <property type="chains" value="A=2-508"/>
</dbReference>
<dbReference type="PDB" id="5CNK">
    <property type="method" value="X-ray"/>
    <property type="resolution" value="3.15 A"/>
    <property type="chains" value="A/B/C=2-507"/>
</dbReference>
<dbReference type="PDB" id="5CNM">
    <property type="method" value="X-ray"/>
    <property type="resolution" value="2.84 A"/>
    <property type="chains" value="A=2-507"/>
</dbReference>
<dbReference type="PDB" id="6B7H">
    <property type="method" value="X-ray"/>
    <property type="resolution" value="2.82 A"/>
    <property type="chains" value="A=2-507"/>
</dbReference>
<dbReference type="PDB" id="7WI6">
    <property type="method" value="EM"/>
    <property type="resolution" value="3.71 A"/>
    <property type="chains" value="A/B=23-879"/>
</dbReference>
<dbReference type="PDB" id="7WI8">
    <property type="method" value="EM"/>
    <property type="resolution" value="4.17 A"/>
    <property type="chains" value="A/B=23-879"/>
</dbReference>
<dbReference type="PDB" id="7WIH">
    <property type="method" value="EM"/>
    <property type="resolution" value="3.68 A"/>
    <property type="chains" value="A/B=23-879"/>
</dbReference>
<dbReference type="PDB" id="8JCU">
    <property type="method" value="EM"/>
    <property type="resolution" value="2.80 A"/>
    <property type="chains" value="3=23-879"/>
</dbReference>
<dbReference type="PDB" id="8JCV">
    <property type="method" value="EM"/>
    <property type="resolution" value="3.40 A"/>
    <property type="chains" value="3=23-879"/>
</dbReference>
<dbReference type="PDB" id="8JCW">
    <property type="method" value="EM"/>
    <property type="resolution" value="3.00 A"/>
    <property type="chains" value="3=23-879"/>
</dbReference>
<dbReference type="PDB" id="8JCX">
    <property type="method" value="EM"/>
    <property type="resolution" value="3.00 A"/>
    <property type="chains" value="3=23-879"/>
</dbReference>
<dbReference type="PDB" id="8JCY">
    <property type="method" value="EM"/>
    <property type="resolution" value="2.90 A"/>
    <property type="chains" value="3=23-879"/>
</dbReference>
<dbReference type="PDB" id="8JCZ">
    <property type="method" value="EM"/>
    <property type="resolution" value="3.00 A"/>
    <property type="chains" value="3=23-879"/>
</dbReference>
<dbReference type="PDB" id="8JD0">
    <property type="method" value="EM"/>
    <property type="resolution" value="3.30 A"/>
    <property type="chains" value="3=23-879"/>
</dbReference>
<dbReference type="PDB" id="8JD1">
    <property type="method" value="EM"/>
    <property type="resolution" value="3.70 A"/>
    <property type="chains" value="3=23-879"/>
</dbReference>
<dbReference type="PDB" id="8JD2">
    <property type="method" value="EM"/>
    <property type="resolution" value="2.80 A"/>
    <property type="chains" value="3=23-879"/>
</dbReference>
<dbReference type="PDB" id="8JD3">
    <property type="method" value="EM"/>
    <property type="resolution" value="3.30 A"/>
    <property type="chains" value="3=23-879"/>
</dbReference>
<dbReference type="PDB" id="9II2">
    <property type="method" value="EM"/>
    <property type="resolution" value="3.70 A"/>
    <property type="chains" value="B/R=1-879"/>
</dbReference>
<dbReference type="PDB" id="9II3">
    <property type="method" value="EM"/>
    <property type="resolution" value="3.90 A"/>
    <property type="chains" value="B/R=1-879"/>
</dbReference>
<dbReference type="PDBsum" id="3SM9"/>
<dbReference type="PDBsum" id="4XAR"/>
<dbReference type="PDBsum" id="5CNK"/>
<dbReference type="PDBsum" id="5CNM"/>
<dbReference type="PDBsum" id="6B7H"/>
<dbReference type="PDBsum" id="7WI6"/>
<dbReference type="PDBsum" id="7WI8"/>
<dbReference type="PDBsum" id="7WIH"/>
<dbReference type="PDBsum" id="8JCU"/>
<dbReference type="PDBsum" id="8JCV"/>
<dbReference type="PDBsum" id="8JCW"/>
<dbReference type="PDBsum" id="8JCX"/>
<dbReference type="PDBsum" id="8JCY"/>
<dbReference type="PDBsum" id="8JCZ"/>
<dbReference type="PDBsum" id="8JD0"/>
<dbReference type="PDBsum" id="8JD1"/>
<dbReference type="PDBsum" id="8JD2"/>
<dbReference type="PDBsum" id="8JD3"/>
<dbReference type="PDBsum" id="9II2"/>
<dbReference type="PDBsum" id="9II3"/>
<dbReference type="EMDB" id="EMD-32526"/>
<dbReference type="EMDB" id="EMD-32527"/>
<dbReference type="EMDB" id="EMD-32530"/>
<dbReference type="EMDB" id="EMD-36174"/>
<dbReference type="EMDB" id="EMD-60588"/>
<dbReference type="EMDB" id="EMD-60589"/>
<dbReference type="SMR" id="Q14832"/>
<dbReference type="BioGRID" id="109170">
    <property type="interactions" value="9"/>
</dbReference>
<dbReference type="CORUM" id="Q14832"/>
<dbReference type="FunCoup" id="Q14832">
    <property type="interactions" value="1073"/>
</dbReference>
<dbReference type="IntAct" id="Q14832">
    <property type="interactions" value="1"/>
</dbReference>
<dbReference type="STRING" id="9606.ENSP00000355316"/>
<dbReference type="BindingDB" id="Q14832"/>
<dbReference type="ChEMBL" id="CHEMBL2888"/>
<dbReference type="DrugBank" id="DB04256">
    <property type="generic name" value="(S)-alpha-methyl-4-carboxyphenylglycine"/>
</dbReference>
<dbReference type="DrugBank" id="DB11923">
    <property type="generic name" value="Decoglurant"/>
</dbReference>
<dbReference type="DrugBank" id="DB05096">
    <property type="generic name" value="LY2140023"/>
</dbReference>
<dbReference type="DrugBank" id="DB04870">
    <property type="generic name" value="Oleoyl-estrone"/>
</dbReference>
<dbReference type="DrugBank" id="DB02999">
    <property type="generic name" value="Quisqualic acid"/>
</dbReference>
<dbReference type="DrugCentral" id="Q14832"/>
<dbReference type="GuidetoPHARMACOLOGY" id="291"/>
<dbReference type="GlyCosmos" id="Q14832">
    <property type="glycosylation" value="4 sites, No reported glycans"/>
</dbReference>
<dbReference type="GlyGen" id="Q14832">
    <property type="glycosylation" value="4 sites"/>
</dbReference>
<dbReference type="iPTMnet" id="Q14832"/>
<dbReference type="PhosphoSitePlus" id="Q14832"/>
<dbReference type="BioMuta" id="GRM3"/>
<dbReference type="DMDM" id="76803803"/>
<dbReference type="MassIVE" id="Q14832"/>
<dbReference type="PaxDb" id="9606-ENSP00000355316"/>
<dbReference type="PeptideAtlas" id="Q14832"/>
<dbReference type="ProteomicsDB" id="60202">
    <molecule id="Q14832-1"/>
</dbReference>
<dbReference type="ProteomicsDB" id="61428"/>
<dbReference type="Antibodypedia" id="15243">
    <property type="antibodies" value="378 antibodies from 35 providers"/>
</dbReference>
<dbReference type="DNASU" id="2913"/>
<dbReference type="Ensembl" id="ENST00000361669.7">
    <molecule id="Q14832-1"/>
    <property type="protein sequence ID" value="ENSP00000355316.2"/>
    <property type="gene ID" value="ENSG00000198822.11"/>
</dbReference>
<dbReference type="Ensembl" id="ENST00000439827.1">
    <molecule id="Q14832-2"/>
    <property type="protein sequence ID" value="ENSP00000398767.1"/>
    <property type="gene ID" value="ENSG00000198822.11"/>
</dbReference>
<dbReference type="GeneID" id="2913"/>
<dbReference type="KEGG" id="hsa:2913"/>
<dbReference type="MANE-Select" id="ENST00000361669.7">
    <property type="protein sequence ID" value="ENSP00000355316.2"/>
    <property type="RefSeq nucleotide sequence ID" value="NM_000840.3"/>
    <property type="RefSeq protein sequence ID" value="NP_000831.2"/>
</dbReference>
<dbReference type="UCSC" id="uc003uid.4">
    <molecule id="Q14832-1"/>
    <property type="organism name" value="human"/>
</dbReference>
<dbReference type="AGR" id="HGNC:4595"/>
<dbReference type="CTD" id="2913"/>
<dbReference type="DisGeNET" id="2913"/>
<dbReference type="GeneCards" id="GRM3"/>
<dbReference type="HGNC" id="HGNC:4595">
    <property type="gene designation" value="GRM3"/>
</dbReference>
<dbReference type="HPA" id="ENSG00000198822">
    <property type="expression patterns" value="Tissue enriched (brain)"/>
</dbReference>
<dbReference type="MalaCards" id="GRM3"/>
<dbReference type="MIM" id="601115">
    <property type="type" value="gene"/>
</dbReference>
<dbReference type="neXtProt" id="NX_Q14832"/>
<dbReference type="OpenTargets" id="ENSG00000198822"/>
<dbReference type="PharmGKB" id="PA28992"/>
<dbReference type="VEuPathDB" id="HostDB:ENSG00000198822"/>
<dbReference type="eggNOG" id="KOG1056">
    <property type="taxonomic scope" value="Eukaryota"/>
</dbReference>
<dbReference type="GeneTree" id="ENSGT01030000234595"/>
<dbReference type="HOGENOM" id="CLU_005389_0_0_1"/>
<dbReference type="InParanoid" id="Q14832"/>
<dbReference type="OMA" id="CNIQDMS"/>
<dbReference type="OrthoDB" id="425344at2759"/>
<dbReference type="PAN-GO" id="Q14832">
    <property type="GO annotations" value="4 GO annotations based on evolutionary models"/>
</dbReference>
<dbReference type="PhylomeDB" id="Q14832"/>
<dbReference type="TreeFam" id="TF313240"/>
<dbReference type="PathwayCommons" id="Q14832"/>
<dbReference type="Reactome" id="R-HSA-418594">
    <property type="pathway name" value="G alpha (i) signalling events"/>
</dbReference>
<dbReference type="Reactome" id="R-HSA-420499">
    <property type="pathway name" value="Class C/3 (Metabotropic glutamate/pheromone receptors)"/>
</dbReference>
<dbReference type="SignaLink" id="Q14832"/>
<dbReference type="SIGNOR" id="Q14832"/>
<dbReference type="BioGRID-ORCS" id="2913">
    <property type="hits" value="11 hits in 1147 CRISPR screens"/>
</dbReference>
<dbReference type="ChiTaRS" id="GRM3">
    <property type="organism name" value="human"/>
</dbReference>
<dbReference type="EvolutionaryTrace" id="Q14832"/>
<dbReference type="GeneWiki" id="Metabotropic_glutamate_receptor_3"/>
<dbReference type="GenomeRNAi" id="2913"/>
<dbReference type="Pharos" id="Q14832">
    <property type="development level" value="Tchem"/>
</dbReference>
<dbReference type="PRO" id="PR:Q14832"/>
<dbReference type="Proteomes" id="UP000005640">
    <property type="component" value="Chromosome 7"/>
</dbReference>
<dbReference type="RNAct" id="Q14832">
    <property type="molecule type" value="protein"/>
</dbReference>
<dbReference type="Bgee" id="ENSG00000198822">
    <property type="expression patterns" value="Expressed in endothelial cell and 102 other cell types or tissues"/>
</dbReference>
<dbReference type="ExpressionAtlas" id="Q14832">
    <property type="expression patterns" value="baseline and differential"/>
</dbReference>
<dbReference type="GO" id="GO:0097449">
    <property type="term" value="C:astrocyte projection"/>
    <property type="evidence" value="ECO:0000250"/>
    <property type="project" value="ARUK-UCL"/>
</dbReference>
<dbReference type="GO" id="GO:0030424">
    <property type="term" value="C:axon"/>
    <property type="evidence" value="ECO:0000250"/>
    <property type="project" value="ARUK-UCL"/>
</dbReference>
<dbReference type="GO" id="GO:0043197">
    <property type="term" value="C:dendritic spine"/>
    <property type="evidence" value="ECO:0007669"/>
    <property type="project" value="Ensembl"/>
</dbReference>
<dbReference type="GO" id="GO:0098978">
    <property type="term" value="C:glutamatergic synapse"/>
    <property type="evidence" value="ECO:0007669"/>
    <property type="project" value="Ensembl"/>
</dbReference>
<dbReference type="GO" id="GO:0005886">
    <property type="term" value="C:plasma membrane"/>
    <property type="evidence" value="ECO:0000314"/>
    <property type="project" value="UniProt"/>
</dbReference>
<dbReference type="GO" id="GO:0014069">
    <property type="term" value="C:postsynaptic density"/>
    <property type="evidence" value="ECO:0007669"/>
    <property type="project" value="Ensembl"/>
</dbReference>
<dbReference type="GO" id="GO:0045211">
    <property type="term" value="C:postsynaptic membrane"/>
    <property type="evidence" value="ECO:0007669"/>
    <property type="project" value="Ensembl"/>
</dbReference>
<dbReference type="GO" id="GO:0042734">
    <property type="term" value="C:presynaptic membrane"/>
    <property type="evidence" value="ECO:0007669"/>
    <property type="project" value="Ensembl"/>
</dbReference>
<dbReference type="GO" id="GO:0005246">
    <property type="term" value="F:calcium channel regulator activity"/>
    <property type="evidence" value="ECO:0007669"/>
    <property type="project" value="Ensembl"/>
</dbReference>
<dbReference type="GO" id="GO:0004930">
    <property type="term" value="F:G protein-coupled receptor activity"/>
    <property type="evidence" value="ECO:0000304"/>
    <property type="project" value="UniProtKB"/>
</dbReference>
<dbReference type="GO" id="GO:0008066">
    <property type="term" value="F:glutamate receptor activity"/>
    <property type="evidence" value="ECO:0000304"/>
    <property type="project" value="UniProtKB"/>
</dbReference>
<dbReference type="GO" id="GO:0001641">
    <property type="term" value="F:group II metabotropic glutamate receptor activity"/>
    <property type="evidence" value="ECO:0000318"/>
    <property type="project" value="GO_Central"/>
</dbReference>
<dbReference type="GO" id="GO:0097110">
    <property type="term" value="F:scaffold protein binding"/>
    <property type="evidence" value="ECO:0000250"/>
    <property type="project" value="ARUK-UCL"/>
</dbReference>
<dbReference type="GO" id="GO:0033554">
    <property type="term" value="P:cellular response to stress"/>
    <property type="evidence" value="ECO:0007669"/>
    <property type="project" value="Ensembl"/>
</dbReference>
<dbReference type="GO" id="GO:0007268">
    <property type="term" value="P:chemical synaptic transmission"/>
    <property type="evidence" value="ECO:0000304"/>
    <property type="project" value="ProtInc"/>
</dbReference>
<dbReference type="GO" id="GO:0007216">
    <property type="term" value="P:G protein-coupled glutamate receptor signaling pathway"/>
    <property type="evidence" value="ECO:0000314"/>
    <property type="project" value="UniProt"/>
</dbReference>
<dbReference type="GO" id="GO:0010467">
    <property type="term" value="P:gene expression"/>
    <property type="evidence" value="ECO:0007669"/>
    <property type="project" value="Ensembl"/>
</dbReference>
<dbReference type="GO" id="GO:0007194">
    <property type="term" value="P:negative regulation of adenylate cyclase activity"/>
    <property type="evidence" value="ECO:0000304"/>
    <property type="project" value="ProtInc"/>
</dbReference>
<dbReference type="GO" id="GO:0099170">
    <property type="term" value="P:postsynaptic modulation of chemical synaptic transmission"/>
    <property type="evidence" value="ECO:0007669"/>
    <property type="project" value="Ensembl"/>
</dbReference>
<dbReference type="GO" id="GO:0051966">
    <property type="term" value="P:regulation of synaptic transmission, glutamatergic"/>
    <property type="evidence" value="ECO:0000318"/>
    <property type="project" value="GO_Central"/>
</dbReference>
<dbReference type="CDD" id="cd15448">
    <property type="entry name" value="7tmC_mGluR3"/>
    <property type="match status" value="1"/>
</dbReference>
<dbReference type="CDD" id="cd06375">
    <property type="entry name" value="PBP1_mGluR_groupII"/>
    <property type="match status" value="1"/>
</dbReference>
<dbReference type="FunFam" id="2.10.50.30:FF:000001">
    <property type="entry name" value="metabotropic glutamate receptor 1"/>
    <property type="match status" value="1"/>
</dbReference>
<dbReference type="FunFam" id="3.40.50.2300:FF:000029">
    <property type="entry name" value="Metabotropic glutamate receptor 3"/>
    <property type="match status" value="1"/>
</dbReference>
<dbReference type="Gene3D" id="3.40.50.2300">
    <property type="match status" value="2"/>
</dbReference>
<dbReference type="Gene3D" id="2.10.50.30">
    <property type="entry name" value="GPCR, family 3, nine cysteines domain"/>
    <property type="match status" value="1"/>
</dbReference>
<dbReference type="InterPro" id="IPR001828">
    <property type="entry name" value="ANF_lig-bd_rcpt"/>
</dbReference>
<dbReference type="InterPro" id="IPR000337">
    <property type="entry name" value="GPCR_3"/>
</dbReference>
<dbReference type="InterPro" id="IPR011500">
    <property type="entry name" value="GPCR_3_9-Cys_dom"/>
</dbReference>
<dbReference type="InterPro" id="IPR038550">
    <property type="entry name" value="GPCR_3_9-Cys_sf"/>
</dbReference>
<dbReference type="InterPro" id="IPR017978">
    <property type="entry name" value="GPCR_3_C"/>
</dbReference>
<dbReference type="InterPro" id="IPR017979">
    <property type="entry name" value="GPCR_3_CS"/>
</dbReference>
<dbReference type="InterPro" id="IPR001234">
    <property type="entry name" value="GPCR_3_mGluR3"/>
</dbReference>
<dbReference type="InterPro" id="IPR000162">
    <property type="entry name" value="GPCR_3_mtglu_rcpt"/>
</dbReference>
<dbReference type="InterPro" id="IPR050726">
    <property type="entry name" value="mGluR"/>
</dbReference>
<dbReference type="InterPro" id="IPR028082">
    <property type="entry name" value="Peripla_BP_I"/>
</dbReference>
<dbReference type="PANTHER" id="PTHR24060">
    <property type="entry name" value="METABOTROPIC GLUTAMATE RECEPTOR"/>
    <property type="match status" value="1"/>
</dbReference>
<dbReference type="Pfam" id="PF00003">
    <property type="entry name" value="7tm_3"/>
    <property type="match status" value="1"/>
</dbReference>
<dbReference type="Pfam" id="PF01094">
    <property type="entry name" value="ANF_receptor"/>
    <property type="match status" value="1"/>
</dbReference>
<dbReference type="Pfam" id="PF07562">
    <property type="entry name" value="NCD3G"/>
    <property type="match status" value="1"/>
</dbReference>
<dbReference type="PRINTS" id="PR00248">
    <property type="entry name" value="GPCRMGR"/>
</dbReference>
<dbReference type="PRINTS" id="PR01053">
    <property type="entry name" value="MTABOTROPC3R"/>
</dbReference>
<dbReference type="PRINTS" id="PR00593">
    <property type="entry name" value="MTABOTROPICR"/>
</dbReference>
<dbReference type="SUPFAM" id="SSF53822">
    <property type="entry name" value="Periplasmic binding protein-like I"/>
    <property type="match status" value="1"/>
</dbReference>
<dbReference type="PROSITE" id="PS00979">
    <property type="entry name" value="G_PROTEIN_RECEP_F3_1"/>
    <property type="match status" value="1"/>
</dbReference>
<dbReference type="PROSITE" id="PS00980">
    <property type="entry name" value="G_PROTEIN_RECEP_F3_2"/>
    <property type="match status" value="1"/>
</dbReference>
<dbReference type="PROSITE" id="PS00981">
    <property type="entry name" value="G_PROTEIN_RECEP_F3_3"/>
    <property type="match status" value="1"/>
</dbReference>
<dbReference type="PROSITE" id="PS50259">
    <property type="entry name" value="G_PROTEIN_RECEP_F3_4"/>
    <property type="match status" value="1"/>
</dbReference>
<sequence length="879" mass="98879">MKMLTRLQVLTLALFSKGFLLSLGDHNFLRREIKIEGDLVLGGLFPINEKGTGTEECGRINEDRGIQRLEAMLFAIDEINKDDYLLPGVKLGVHILDTCSRDTYALEQSLEFVRASLTKVDEAEYMCPDGSYAIQENIPLLIAGVIGGSYSSVSIQVANLLRLFQIPQISYASTSAKLSDKSRYDYFARTVPPDFYQAKAMAEILRFFNWTYVSTVASEGDYGETGIEAFEQEARLRNICIATAEKVGRSNIRKSYDSVIRELLQKPNARVVVLFMRSDDSRELIAAASRANASFTWVASDGWGAQESIIKGSEHVAYGAITLELASQPVRQFDRYFQSLNPYNNHRNPWFRDFWEQKFQCSLQNKRNHRRVCDKHLAIDSSNYEQESKIMFVVNAVYAMAHALHKMQRTLCPNTTKLCDAMKILDGKKLYKDYLLKINFTAPFNPNKDADSIVKFDTFGDGMGRYNVFNFQNVGGKYSYLKVGHWAETLSLDVNSIHWSRNSVPTSQCSDPCAPNEMKNMQPGDVCCWICIPCEPYEYLADEFTCMDCGSGQWPTADLTGCYDLPEDYIRWEDAWAIGPVTIACLGFMCTCMVVTVFIKHNNTPLVKASGRELCYILLFGVGLSYCMTFFFIAKPSPVICALRRLGLGSSFAICYSALLTKTNCIARIFDGVKNGAQRPKFISPSSQVFICLGLILVQIVMVSVWLILEAPGTRRYTLAEKRETVILKCNVKDSSMLISLTYDVILVILCTVYAFKTRKCPENFNEAKFIGFTMYTTCIIWLAFLPIFYVTSSDYRVQTTTMCISVSLSGFVVLGCLFAPKVHIILFQPQKNVVTHRLHLNRFSVSGTGTTYSQSSASTYVPTVCNGREVLDSTTSSL</sequence>
<gene>
    <name type="primary">GRM3</name>
    <name type="synonym">GPRC1C</name>
    <name type="synonym">MGLUR3</name>
</gene>
<reference key="1">
    <citation type="journal article" date="1996" name="Brain Res. Mol. Brain Res.">
        <title>Molecular characterization and localization of human metabotropic glutamate receptor type 3.</title>
        <authorList>
            <person name="Makoff A."/>
            <person name="Volpe F."/>
            <person name="Lelchuk R."/>
            <person name="Harrington K."/>
            <person name="Emson P."/>
        </authorList>
    </citation>
    <scope>NUCLEOTIDE SEQUENCE [MRNA] (ISOFORM 1)</scope>
    <scope>FUNCTION</scope>
    <scope>SUBCELLULAR LOCATION</scope>
    <scope>TISSUE SPECIFICITY</scope>
    <source>
        <tissue>Brain</tissue>
    </source>
</reference>
<reference key="2">
    <citation type="journal article" date="2006" name="J. Neurochem.">
        <title>Alternative splicing of human metabotropic glutamate receptor 3.</title>
        <authorList>
            <person name="Sartorius L.J."/>
            <person name="Nagappan G."/>
            <person name="Lipska B.K."/>
            <person name="Lu B."/>
            <person name="Sei Y."/>
            <person name="Ren-Patterson R."/>
            <person name="Li Z."/>
            <person name="Weinberger D.R."/>
            <person name="Harrison P.J."/>
        </authorList>
    </citation>
    <scope>NUCLEOTIDE SEQUENCE [MRNA] (ISOFORM 2)</scope>
    <scope>ALTERNATIVE SPLICING</scope>
    <source>
        <tissue>Lymphoblast</tissue>
    </source>
</reference>
<reference key="3">
    <citation type="journal article" date="2003" name="Nature">
        <title>The DNA sequence of human chromosome 7.</title>
        <authorList>
            <person name="Hillier L.W."/>
            <person name="Fulton R.S."/>
            <person name="Fulton L.A."/>
            <person name="Graves T.A."/>
            <person name="Pepin K.H."/>
            <person name="Wagner-McPherson C."/>
            <person name="Layman D."/>
            <person name="Maas J."/>
            <person name="Jaeger S."/>
            <person name="Walker R."/>
            <person name="Wylie K."/>
            <person name="Sekhon M."/>
            <person name="Becker M.C."/>
            <person name="O'Laughlin M.D."/>
            <person name="Schaller M.E."/>
            <person name="Fewell G.A."/>
            <person name="Delehaunty K.D."/>
            <person name="Miner T.L."/>
            <person name="Nash W.E."/>
            <person name="Cordes M."/>
            <person name="Du H."/>
            <person name="Sun H."/>
            <person name="Edwards J."/>
            <person name="Bradshaw-Cordum H."/>
            <person name="Ali J."/>
            <person name="Andrews S."/>
            <person name="Isak A."/>
            <person name="Vanbrunt A."/>
            <person name="Nguyen C."/>
            <person name="Du F."/>
            <person name="Lamar B."/>
            <person name="Courtney L."/>
            <person name="Kalicki J."/>
            <person name="Ozersky P."/>
            <person name="Bielicki L."/>
            <person name="Scott K."/>
            <person name="Holmes A."/>
            <person name="Harkins R."/>
            <person name="Harris A."/>
            <person name="Strong C.M."/>
            <person name="Hou S."/>
            <person name="Tomlinson C."/>
            <person name="Dauphin-Kohlberg S."/>
            <person name="Kozlowicz-Reilly A."/>
            <person name="Leonard S."/>
            <person name="Rohlfing T."/>
            <person name="Rock S.M."/>
            <person name="Tin-Wollam A.-M."/>
            <person name="Abbott A."/>
            <person name="Minx P."/>
            <person name="Maupin R."/>
            <person name="Strowmatt C."/>
            <person name="Latreille P."/>
            <person name="Miller N."/>
            <person name="Johnson D."/>
            <person name="Murray J."/>
            <person name="Woessner J.P."/>
            <person name="Wendl M.C."/>
            <person name="Yang S.-P."/>
            <person name="Schultz B.R."/>
            <person name="Wallis J.W."/>
            <person name="Spieth J."/>
            <person name="Bieri T.A."/>
            <person name="Nelson J.O."/>
            <person name="Berkowicz N."/>
            <person name="Wohldmann P.E."/>
            <person name="Cook L.L."/>
            <person name="Hickenbotham M.T."/>
            <person name="Eldred J."/>
            <person name="Williams D."/>
            <person name="Bedell J.A."/>
            <person name="Mardis E.R."/>
            <person name="Clifton S.W."/>
            <person name="Chissoe S.L."/>
            <person name="Marra M.A."/>
            <person name="Raymond C."/>
            <person name="Haugen E."/>
            <person name="Gillett W."/>
            <person name="Zhou Y."/>
            <person name="James R."/>
            <person name="Phelps K."/>
            <person name="Iadanoto S."/>
            <person name="Bubb K."/>
            <person name="Simms E."/>
            <person name="Levy R."/>
            <person name="Clendenning J."/>
            <person name="Kaul R."/>
            <person name="Kent W.J."/>
            <person name="Furey T.S."/>
            <person name="Baertsch R.A."/>
            <person name="Brent M.R."/>
            <person name="Keibler E."/>
            <person name="Flicek P."/>
            <person name="Bork P."/>
            <person name="Suyama M."/>
            <person name="Bailey J.A."/>
            <person name="Portnoy M.E."/>
            <person name="Torrents D."/>
            <person name="Chinwalla A.T."/>
            <person name="Gish W.R."/>
            <person name="Eddy S.R."/>
            <person name="McPherson J.D."/>
            <person name="Olson M.V."/>
            <person name="Eichler E.E."/>
            <person name="Green E.D."/>
            <person name="Waterston R.H."/>
            <person name="Wilson R.K."/>
        </authorList>
    </citation>
    <scope>NUCLEOTIDE SEQUENCE [LARGE SCALE GENOMIC DNA]</scope>
</reference>
<reference key="4">
    <citation type="journal article" date="2004" name="Genome Res.">
        <title>The status, quality, and expansion of the NIH full-length cDNA project: the Mammalian Gene Collection (MGC).</title>
        <authorList>
            <consortium name="The MGC Project Team"/>
        </authorList>
    </citation>
    <scope>NUCLEOTIDE SEQUENCE [LARGE SCALE MRNA] (ISOFORM 1)</scope>
    <source>
        <tissue>Brain</tissue>
    </source>
</reference>
<reference key="5">
    <citation type="submission" date="2011-07" db="PDB data bank">
        <title>Crystal structure of metabotropic glutamate receptor 3 precursor in presence of LY341495 antagonist.</title>
        <authorList>
            <consortium name="Structural genomics consortium (SGC)"/>
        </authorList>
    </citation>
    <scope>X-RAY CRYSTALLOGRAPHY (2.26 ANGSTROMS) OF 26-504 OF MUTANT SER-240</scope>
    <scope>DISULFIDE BONDS</scope>
</reference>
<organism>
    <name type="scientific">Homo sapiens</name>
    <name type="common">Human</name>
    <dbReference type="NCBI Taxonomy" id="9606"/>
    <lineage>
        <taxon>Eukaryota</taxon>
        <taxon>Metazoa</taxon>
        <taxon>Chordata</taxon>
        <taxon>Craniata</taxon>
        <taxon>Vertebrata</taxon>
        <taxon>Euteleostomi</taxon>
        <taxon>Mammalia</taxon>
        <taxon>Eutheria</taxon>
        <taxon>Euarchontoglires</taxon>
        <taxon>Primates</taxon>
        <taxon>Haplorrhini</taxon>
        <taxon>Catarrhini</taxon>
        <taxon>Hominidae</taxon>
        <taxon>Homo</taxon>
    </lineage>
</organism>
<accession>Q14832</accession>
<accession>Q2PNZ6</accession>
<accession>Q75MV4</accession>
<accession>Q75N17</accession>
<accession>Q86YG6</accession>
<accession>Q8TBH9</accession>
<name>GRM3_HUMAN</name>